<gene>
    <name evidence="1" type="primary">yidC</name>
    <name type="ordered locus">Swoo_4929</name>
</gene>
<proteinExistence type="inferred from homology"/>
<name>YIDC_SHEWM</name>
<evidence type="ECO:0000255" key="1">
    <source>
        <dbReference type="HAMAP-Rule" id="MF_01810"/>
    </source>
</evidence>
<dbReference type="EMBL" id="CP000961">
    <property type="protein sequence ID" value="ACA89178.1"/>
    <property type="molecule type" value="Genomic_DNA"/>
</dbReference>
<dbReference type="RefSeq" id="WP_012327494.1">
    <property type="nucleotide sequence ID" value="NC_010506.1"/>
</dbReference>
<dbReference type="SMR" id="B1KQ65"/>
<dbReference type="STRING" id="392500.Swoo_4929"/>
<dbReference type="KEGG" id="swd:Swoo_4929"/>
<dbReference type="eggNOG" id="COG0706">
    <property type="taxonomic scope" value="Bacteria"/>
</dbReference>
<dbReference type="HOGENOM" id="CLU_016535_3_0_6"/>
<dbReference type="Proteomes" id="UP000002168">
    <property type="component" value="Chromosome"/>
</dbReference>
<dbReference type="GO" id="GO:0005886">
    <property type="term" value="C:plasma membrane"/>
    <property type="evidence" value="ECO:0007669"/>
    <property type="project" value="UniProtKB-SubCell"/>
</dbReference>
<dbReference type="GO" id="GO:0032977">
    <property type="term" value="F:membrane insertase activity"/>
    <property type="evidence" value="ECO:0007669"/>
    <property type="project" value="InterPro"/>
</dbReference>
<dbReference type="GO" id="GO:0051205">
    <property type="term" value="P:protein insertion into membrane"/>
    <property type="evidence" value="ECO:0007669"/>
    <property type="project" value="TreeGrafter"/>
</dbReference>
<dbReference type="GO" id="GO:0015031">
    <property type="term" value="P:protein transport"/>
    <property type="evidence" value="ECO:0007669"/>
    <property type="project" value="UniProtKB-KW"/>
</dbReference>
<dbReference type="CDD" id="cd20070">
    <property type="entry name" value="5TM_YidC_Alb3"/>
    <property type="match status" value="1"/>
</dbReference>
<dbReference type="CDD" id="cd19961">
    <property type="entry name" value="EcYidC-like_peri"/>
    <property type="match status" value="1"/>
</dbReference>
<dbReference type="Gene3D" id="2.70.98.90">
    <property type="match status" value="1"/>
</dbReference>
<dbReference type="HAMAP" id="MF_01810">
    <property type="entry name" value="YidC_type1"/>
    <property type="match status" value="1"/>
</dbReference>
<dbReference type="InterPro" id="IPR019998">
    <property type="entry name" value="Membr_insert_YidC"/>
</dbReference>
<dbReference type="InterPro" id="IPR028053">
    <property type="entry name" value="Membr_insert_YidC_N"/>
</dbReference>
<dbReference type="InterPro" id="IPR001708">
    <property type="entry name" value="YidC/ALB3/OXA1/COX18"/>
</dbReference>
<dbReference type="InterPro" id="IPR028055">
    <property type="entry name" value="YidC/Oxa/ALB_C"/>
</dbReference>
<dbReference type="InterPro" id="IPR047196">
    <property type="entry name" value="YidC_ALB_C"/>
</dbReference>
<dbReference type="InterPro" id="IPR038221">
    <property type="entry name" value="YidC_periplasmic_sf"/>
</dbReference>
<dbReference type="NCBIfam" id="NF002351">
    <property type="entry name" value="PRK01318.1-1"/>
    <property type="match status" value="1"/>
</dbReference>
<dbReference type="NCBIfam" id="NF002352">
    <property type="entry name" value="PRK01318.1-3"/>
    <property type="match status" value="1"/>
</dbReference>
<dbReference type="NCBIfam" id="TIGR03593">
    <property type="entry name" value="yidC_nterm"/>
    <property type="match status" value="1"/>
</dbReference>
<dbReference type="NCBIfam" id="TIGR03592">
    <property type="entry name" value="yidC_oxa1_cterm"/>
    <property type="match status" value="1"/>
</dbReference>
<dbReference type="PANTHER" id="PTHR12428:SF65">
    <property type="entry name" value="CYTOCHROME C OXIDASE ASSEMBLY PROTEIN COX18, MITOCHONDRIAL"/>
    <property type="match status" value="1"/>
</dbReference>
<dbReference type="PANTHER" id="PTHR12428">
    <property type="entry name" value="OXA1"/>
    <property type="match status" value="1"/>
</dbReference>
<dbReference type="Pfam" id="PF02096">
    <property type="entry name" value="60KD_IMP"/>
    <property type="match status" value="1"/>
</dbReference>
<dbReference type="Pfam" id="PF14849">
    <property type="entry name" value="YidC_periplas"/>
    <property type="match status" value="1"/>
</dbReference>
<dbReference type="PRINTS" id="PR00701">
    <property type="entry name" value="60KDINNERMP"/>
</dbReference>
<dbReference type="PRINTS" id="PR01900">
    <property type="entry name" value="YIDCPROTEIN"/>
</dbReference>
<reference key="1">
    <citation type="submission" date="2008-02" db="EMBL/GenBank/DDBJ databases">
        <title>Complete sequence of Shewanella woodyi ATCC 51908.</title>
        <authorList>
            <consortium name="US DOE Joint Genome Institute"/>
            <person name="Copeland A."/>
            <person name="Lucas S."/>
            <person name="Lapidus A."/>
            <person name="Glavina del Rio T."/>
            <person name="Dalin E."/>
            <person name="Tice H."/>
            <person name="Bruce D."/>
            <person name="Goodwin L."/>
            <person name="Pitluck S."/>
            <person name="Sims D."/>
            <person name="Brettin T."/>
            <person name="Detter J.C."/>
            <person name="Han C."/>
            <person name="Kuske C.R."/>
            <person name="Schmutz J."/>
            <person name="Larimer F."/>
            <person name="Land M."/>
            <person name="Hauser L."/>
            <person name="Kyrpides N."/>
            <person name="Lykidis A."/>
            <person name="Zhao J.-S."/>
            <person name="Richardson P."/>
        </authorList>
    </citation>
    <scope>NUCLEOTIDE SEQUENCE [LARGE SCALE GENOMIC DNA]</scope>
    <source>
        <strain>ATCC 51908 / MS32</strain>
    </source>
</reference>
<sequence length="544" mass="60964">MESQRNILLIGLLFVSFLLWQQWQTDQAPQPVATQSSSVVTASSASDSHSSDVPDADSALPAAVVASKDLITVNTDQLIIKINPVGGDIVYSALVEHKLELENDEPFVLLEQTNDINYIAQSGLIGRDGIDSSVKGRAHFDSASRNYSLAAGQDTLEVPLTYVAENGATYTKMFIFHRGKFDVDVDYVIDNKTDKQLQVQMYGQIKHSIKKSESSMMMPTYRGAAFSTQDTRYEKYSFEDMADKNLDKKTLGGWAAMLQHYFVSAWVPPANDQNIIFSSISAGGQANIGFRGAIFDVAPGATQEITSQFYVGPKDQAALSAISPTLNLVVDYGFLWWLAVPIYKLLMFFQSIVGNWGAAIILITLTVRGLLYPLTKAQYTSMAKMRNLQPKLAEMKERFGDDRQKMGQAMMELYKKEKVNPMGGCLPILLQMPIFIALYWVLLESVELRHAPFMLWITDLSVQDPYYVMPILMGVSMFVMQKMQPMAPTMDPMQVKMMQWMPVVFTVFFLWFPAGLVLYWLVGNLVAIAQQKYIYAGLEKKGLK</sequence>
<protein>
    <recommendedName>
        <fullName evidence="1">Membrane protein insertase YidC</fullName>
    </recommendedName>
    <alternativeName>
        <fullName evidence="1">Foldase YidC</fullName>
    </alternativeName>
    <alternativeName>
        <fullName evidence="1">Membrane integrase YidC</fullName>
    </alternativeName>
    <alternativeName>
        <fullName evidence="1">Membrane protein YidC</fullName>
    </alternativeName>
</protein>
<organism>
    <name type="scientific">Shewanella woodyi (strain ATCC 51908 / MS32)</name>
    <dbReference type="NCBI Taxonomy" id="392500"/>
    <lineage>
        <taxon>Bacteria</taxon>
        <taxon>Pseudomonadati</taxon>
        <taxon>Pseudomonadota</taxon>
        <taxon>Gammaproteobacteria</taxon>
        <taxon>Alteromonadales</taxon>
        <taxon>Shewanellaceae</taxon>
        <taxon>Shewanella</taxon>
    </lineage>
</organism>
<comment type="function">
    <text evidence="1">Required for the insertion and/or proper folding and/or complex formation of integral membrane proteins into the membrane. Involved in integration of membrane proteins that insert both dependently and independently of the Sec translocase complex, as well as at least some lipoproteins. Aids folding of multispanning membrane proteins.</text>
</comment>
<comment type="subunit">
    <text evidence="1">Interacts with the Sec translocase complex via SecD. Specifically interacts with transmembrane segments of nascent integral membrane proteins during membrane integration.</text>
</comment>
<comment type="subcellular location">
    <subcellularLocation>
        <location evidence="1">Cell inner membrane</location>
        <topology evidence="1">Multi-pass membrane protein</topology>
    </subcellularLocation>
</comment>
<comment type="similarity">
    <text evidence="1">Belongs to the OXA1/ALB3/YidC family. Type 1 subfamily.</text>
</comment>
<keyword id="KW-0997">Cell inner membrane</keyword>
<keyword id="KW-1003">Cell membrane</keyword>
<keyword id="KW-0143">Chaperone</keyword>
<keyword id="KW-0472">Membrane</keyword>
<keyword id="KW-0653">Protein transport</keyword>
<keyword id="KW-1185">Reference proteome</keyword>
<keyword id="KW-0812">Transmembrane</keyword>
<keyword id="KW-1133">Transmembrane helix</keyword>
<keyword id="KW-0813">Transport</keyword>
<accession>B1KQ65</accession>
<feature type="chain" id="PRO_1000187707" description="Membrane protein insertase YidC">
    <location>
        <begin position="1"/>
        <end position="544"/>
    </location>
</feature>
<feature type="transmembrane region" description="Helical" evidence="1">
    <location>
        <begin position="6"/>
        <end position="26"/>
    </location>
</feature>
<feature type="transmembrane region" description="Helical" evidence="1">
    <location>
        <begin position="345"/>
        <end position="365"/>
    </location>
</feature>
<feature type="transmembrane region" description="Helical" evidence="1">
    <location>
        <begin position="423"/>
        <end position="443"/>
    </location>
</feature>
<feature type="transmembrane region" description="Helical" evidence="1">
    <location>
        <begin position="460"/>
        <end position="480"/>
    </location>
</feature>
<feature type="transmembrane region" description="Helical" evidence="1">
    <location>
        <begin position="503"/>
        <end position="523"/>
    </location>
</feature>